<proteinExistence type="inferred from homology"/>
<sequence>MFKKLFGKAKEVDKNIKIYAPLTGEYVKIEDIPDPVFAQKMMGEGFGINPTEGEVVSPIEGKVDNVFPTKHAVGLKAENGLELLVHIGLDTVQLDGKGFEVLVESGDDIKIGDPLIRFDLEYINNNAKSIISPIIITNSDQTESIHIEDVQAVVKGETQVIDVTVS</sequence>
<feature type="chain" id="PRO_0000186554" description="PTS system glucose-specific EIIA component">
    <location>
        <begin position="1"/>
        <end position="166"/>
    </location>
</feature>
<feature type="domain" description="PTS EIIA type-1" evidence="2">
    <location>
        <begin position="34"/>
        <end position="138"/>
    </location>
</feature>
<feature type="active site" description="Tele-phosphohistidine intermediate; for EIIA activity" evidence="1 2">
    <location>
        <position position="86"/>
    </location>
</feature>
<feature type="binding site" evidence="1">
    <location>
        <position position="71"/>
    </location>
    <ligand>
        <name>Zn(2+)</name>
        <dbReference type="ChEBI" id="CHEBI:29105"/>
        <note>ligand shared with glycerol kinase</note>
    </ligand>
</feature>
<feature type="binding site" evidence="1">
    <location>
        <position position="86"/>
    </location>
    <ligand>
        <name>Zn(2+)</name>
        <dbReference type="ChEBI" id="CHEBI:29105"/>
        <note>ligand shared with glycerol kinase</note>
    </ligand>
</feature>
<feature type="site" description="Important for phospho-donor activity" evidence="1">
    <location>
        <position position="71"/>
    </location>
</feature>
<feature type="modified residue" description="Phosphohistidine; by HPr" evidence="1">
    <location>
        <position position="86"/>
    </location>
</feature>
<comment type="function">
    <text evidence="1">The phosphoenolpyruvate-dependent sugar phosphotransferase system (sugar PTS), a major carbohydrate active transport system, catalyzes the phosphorylation of incoming sugar substrates concomitantly with their translocation across the cell membrane. The enzyme II complex composed of PtsG and Crr is involved in glucose transport.</text>
</comment>
<comment type="cofactor">
    <cofactor evidence="1">
        <name>Zn(2+)</name>
        <dbReference type="ChEBI" id="CHEBI:29105"/>
    </cofactor>
    <text evidence="1">Binds 1 zinc ion per glycerol kinase EIIA-Glc dimer. The zinc ion is important for dimerization.</text>
</comment>
<comment type="subunit">
    <text evidence="1">Heterodimer with glycerol kinase (glpk).</text>
</comment>
<comment type="subcellular location">
    <subcellularLocation>
        <location evidence="3">Cytoplasm</location>
    </subcellularLocation>
</comment>
<comment type="domain">
    <text evidence="2">The EIIA domain is phosphorylated by phospho-HPr on a histidyl residue. Then, it transfers the phosphoryl group to the EIIB domain.</text>
</comment>
<gene>
    <name type="primary">crr</name>
    <name type="ordered locus">SE_1115</name>
</gene>
<protein>
    <recommendedName>
        <fullName evidence="1">PTS system glucose-specific EIIA component</fullName>
    </recommendedName>
    <alternativeName>
        <fullName evidence="1">EIIA-Glc</fullName>
    </alternativeName>
    <alternativeName>
        <fullName evidence="1">EIII-Glc</fullName>
    </alternativeName>
    <alternativeName>
        <fullName evidence="1">Glucose-specific phosphotransferase enzyme IIA component</fullName>
    </alternativeName>
</protein>
<accession>Q8CP79</accession>
<name>PTGA_STAES</name>
<dbReference type="EMBL" id="AE015929">
    <property type="protein sequence ID" value="AAO04712.1"/>
    <property type="molecule type" value="Genomic_DNA"/>
</dbReference>
<dbReference type="RefSeq" id="NP_764670.1">
    <property type="nucleotide sequence ID" value="NC_004461.1"/>
</dbReference>
<dbReference type="RefSeq" id="WP_001831133.1">
    <property type="nucleotide sequence ID" value="NZ_WBME01000002.1"/>
</dbReference>
<dbReference type="SMR" id="Q8CP79"/>
<dbReference type="KEGG" id="sep:SE_1115"/>
<dbReference type="PATRIC" id="fig|176280.10.peg.1088"/>
<dbReference type="eggNOG" id="COG2190">
    <property type="taxonomic scope" value="Bacteria"/>
</dbReference>
<dbReference type="HOGENOM" id="CLU_012312_5_3_9"/>
<dbReference type="OrthoDB" id="92465at2"/>
<dbReference type="Proteomes" id="UP000001411">
    <property type="component" value="Chromosome"/>
</dbReference>
<dbReference type="GO" id="GO:0005737">
    <property type="term" value="C:cytoplasm"/>
    <property type="evidence" value="ECO:0007669"/>
    <property type="project" value="UniProtKB-SubCell"/>
</dbReference>
<dbReference type="GO" id="GO:0016301">
    <property type="term" value="F:kinase activity"/>
    <property type="evidence" value="ECO:0007669"/>
    <property type="project" value="UniProtKB-KW"/>
</dbReference>
<dbReference type="GO" id="GO:0046872">
    <property type="term" value="F:metal ion binding"/>
    <property type="evidence" value="ECO:0007669"/>
    <property type="project" value="UniProtKB-KW"/>
</dbReference>
<dbReference type="GO" id="GO:0009401">
    <property type="term" value="P:phosphoenolpyruvate-dependent sugar phosphotransferase system"/>
    <property type="evidence" value="ECO:0007669"/>
    <property type="project" value="UniProtKB-KW"/>
</dbReference>
<dbReference type="FunFam" id="2.70.70.10:FF:000001">
    <property type="entry name" value="PTS system glucose-specific IIA component"/>
    <property type="match status" value="1"/>
</dbReference>
<dbReference type="Gene3D" id="2.70.70.10">
    <property type="entry name" value="Glucose Permease (Domain IIA)"/>
    <property type="match status" value="1"/>
</dbReference>
<dbReference type="InterPro" id="IPR011055">
    <property type="entry name" value="Dup_hybrid_motif"/>
</dbReference>
<dbReference type="InterPro" id="IPR001127">
    <property type="entry name" value="PTS_EIIA_1_perm"/>
</dbReference>
<dbReference type="InterPro" id="IPR050890">
    <property type="entry name" value="PTS_EIIA_component"/>
</dbReference>
<dbReference type="NCBIfam" id="TIGR00830">
    <property type="entry name" value="PTBA"/>
    <property type="match status" value="1"/>
</dbReference>
<dbReference type="PANTHER" id="PTHR45008">
    <property type="entry name" value="PTS SYSTEM GLUCOSE-SPECIFIC EIIA COMPONENT"/>
    <property type="match status" value="1"/>
</dbReference>
<dbReference type="PANTHER" id="PTHR45008:SF1">
    <property type="entry name" value="PTS SYSTEM GLUCOSE-SPECIFIC EIIA COMPONENT"/>
    <property type="match status" value="1"/>
</dbReference>
<dbReference type="Pfam" id="PF00358">
    <property type="entry name" value="PTS_EIIA_1"/>
    <property type="match status" value="1"/>
</dbReference>
<dbReference type="SUPFAM" id="SSF51261">
    <property type="entry name" value="Duplicated hybrid motif"/>
    <property type="match status" value="1"/>
</dbReference>
<dbReference type="PROSITE" id="PS51093">
    <property type="entry name" value="PTS_EIIA_TYPE_1"/>
    <property type="match status" value="1"/>
</dbReference>
<dbReference type="PROSITE" id="PS00371">
    <property type="entry name" value="PTS_EIIA_TYPE_1_HIS"/>
    <property type="match status" value="1"/>
</dbReference>
<organism>
    <name type="scientific">Staphylococcus epidermidis (strain ATCC 12228 / FDA PCI 1200)</name>
    <dbReference type="NCBI Taxonomy" id="176280"/>
    <lineage>
        <taxon>Bacteria</taxon>
        <taxon>Bacillati</taxon>
        <taxon>Bacillota</taxon>
        <taxon>Bacilli</taxon>
        <taxon>Bacillales</taxon>
        <taxon>Staphylococcaceae</taxon>
        <taxon>Staphylococcus</taxon>
    </lineage>
</organism>
<evidence type="ECO:0000250" key="1">
    <source>
        <dbReference type="UniProtKB" id="P69783"/>
    </source>
</evidence>
<evidence type="ECO:0000255" key="2">
    <source>
        <dbReference type="PROSITE-ProRule" id="PRU00416"/>
    </source>
</evidence>
<evidence type="ECO:0000305" key="3"/>
<reference key="1">
    <citation type="journal article" date="2003" name="Mol. Microbiol.">
        <title>Genome-based analysis of virulence genes in a non-biofilm-forming Staphylococcus epidermidis strain (ATCC 12228).</title>
        <authorList>
            <person name="Zhang Y.-Q."/>
            <person name="Ren S.-X."/>
            <person name="Li H.-L."/>
            <person name="Wang Y.-X."/>
            <person name="Fu G."/>
            <person name="Yang J."/>
            <person name="Qin Z.-Q."/>
            <person name="Miao Y.-G."/>
            <person name="Wang W.-Y."/>
            <person name="Chen R.-S."/>
            <person name="Shen Y."/>
            <person name="Chen Z."/>
            <person name="Yuan Z.-H."/>
            <person name="Zhao G.-P."/>
            <person name="Qu D."/>
            <person name="Danchin A."/>
            <person name="Wen Y.-M."/>
        </authorList>
    </citation>
    <scope>NUCLEOTIDE SEQUENCE [LARGE SCALE GENOMIC DNA]</scope>
    <source>
        <strain>ATCC 12228 / FDA PCI 1200</strain>
    </source>
</reference>
<keyword id="KW-0963">Cytoplasm</keyword>
<keyword id="KW-0418">Kinase</keyword>
<keyword id="KW-0479">Metal-binding</keyword>
<keyword id="KW-0597">Phosphoprotein</keyword>
<keyword id="KW-0598">Phosphotransferase system</keyword>
<keyword id="KW-0762">Sugar transport</keyword>
<keyword id="KW-0808">Transferase</keyword>
<keyword id="KW-0813">Transport</keyword>
<keyword id="KW-0862">Zinc</keyword>